<sequence>MLPNSILKKIYICNQKEKIISRSFLLKLFKSQIGYPKSLAQLNSALSSIMRWYSHKGYQWALIQMHYIEGSSSIIVNIDEGLISTIRTEYYTSSLERSSKSSYTNMIEKHLSIRIGHPINIIYLKRKINYLKKNKLVGNIIYSVERSRNNSSHLDLKFQIQELQDKELVLFGENLYKTSYVIAFLSHLLQEPLYLANSWETYNIDQMSANRFKLHYYQPICNYQYINNKELADILIYLFSKSTFQHIKNSRFNPLLNCDGETTSRCKLYLRNLSNASSYFTVSMHSLENTINLKLRYLNPSLRISKKFTIQVVIQIIKKIASSCIFPSSIFLKNQKIFGQKFTNQYIFEGLMTYNITSCFSMSEKIFLSRNVQTKYFVKNLQTVKFISTTKALIGSNDHWLKKQSKLLYRQFLVLWLKLYYQNFDTLKWPTKGHLLEIESCYFTPFQESTFLNYHSQFHYNNLFFHKINIQHITHFSLPFYFQSRINYILRNVLKVQSNLKMETLPILLCRAYFEDKVCKPFFNFSIRIRTEYQVPINNKSRISFFCNYIRPFLKNSYQTCIIFQSSLINQKFISSLYQKLFYGLEIQLKLPINQIPPLSIEYTINSGRKFCIYLYISHQQ</sequence>
<geneLocation type="chloroplast"/>
<accession>P51234</accession>
<feature type="chain" id="PRO_0000217477" description="Uncharacterized protein ORF621">
    <location>
        <begin position="1"/>
        <end position="621"/>
    </location>
</feature>
<reference key="1">
    <citation type="journal article" date="1995" name="Plant Mol. Biol. Rep.">
        <title>Complete nucleotide sequence of the Porphyra purpurea chloroplast genome.</title>
        <authorList>
            <person name="Reith M.E."/>
            <person name="Munholland J."/>
        </authorList>
    </citation>
    <scope>NUCLEOTIDE SEQUENCE [LARGE SCALE GENOMIC DNA]</scope>
    <source>
        <strain>Avonport</strain>
    </source>
</reference>
<protein>
    <recommendedName>
        <fullName>Uncharacterized protein ORF621</fullName>
    </recommendedName>
</protein>
<comment type="subcellular location">
    <subcellularLocation>
        <location>Plastid</location>
        <location>Chloroplast</location>
    </subcellularLocation>
</comment>
<name>YCXB_PORPU</name>
<dbReference type="EMBL" id="U38804">
    <property type="protein sequence ID" value="AAC08120.1"/>
    <property type="molecule type" value="Genomic_DNA"/>
</dbReference>
<dbReference type="PIR" id="S73155">
    <property type="entry name" value="S73155"/>
</dbReference>
<dbReference type="RefSeq" id="NP_053844.1">
    <property type="nucleotide sequence ID" value="NC_000925.1"/>
</dbReference>
<dbReference type="SMR" id="P51234"/>
<dbReference type="GeneID" id="809863"/>
<dbReference type="GO" id="GO:0009507">
    <property type="term" value="C:chloroplast"/>
    <property type="evidence" value="ECO:0007669"/>
    <property type="project" value="UniProtKB-SubCell"/>
</dbReference>
<dbReference type="Gene3D" id="3.10.20.310">
    <property type="entry name" value="membrane protein fhac"/>
    <property type="match status" value="1"/>
</dbReference>
<proteinExistence type="predicted"/>
<organism>
    <name type="scientific">Porphyra purpurea</name>
    <name type="common">Red seaweed</name>
    <name type="synonym">Ulva purpurea</name>
    <dbReference type="NCBI Taxonomy" id="2787"/>
    <lineage>
        <taxon>Eukaryota</taxon>
        <taxon>Rhodophyta</taxon>
        <taxon>Bangiophyceae</taxon>
        <taxon>Bangiales</taxon>
        <taxon>Bangiaceae</taxon>
        <taxon>Porphyra</taxon>
    </lineage>
</organism>
<keyword id="KW-0150">Chloroplast</keyword>
<keyword id="KW-0934">Plastid</keyword>